<dbReference type="EMBL" id="BC106584">
    <property type="protein sequence ID" value="AAI06585.1"/>
    <property type="molecule type" value="mRNA"/>
</dbReference>
<dbReference type="RefSeq" id="NP_001089797.1">
    <property type="nucleotide sequence ID" value="NM_001096328.1"/>
</dbReference>
<dbReference type="SMR" id="Q3KPS4"/>
<dbReference type="DNASU" id="734862"/>
<dbReference type="GeneID" id="734862"/>
<dbReference type="KEGG" id="xla:734862"/>
<dbReference type="AGR" id="Xenbase:XB-GENE-6255000"/>
<dbReference type="CTD" id="734862"/>
<dbReference type="Xenbase" id="XB-GENE-6255000">
    <property type="gene designation" value="cfap126.L"/>
</dbReference>
<dbReference type="OrthoDB" id="521617at2759"/>
<dbReference type="Proteomes" id="UP000186698">
    <property type="component" value="Chromosome 8L"/>
</dbReference>
<dbReference type="Bgee" id="734862">
    <property type="expression patterns" value="Expressed in testis and 18 other cell types or tissues"/>
</dbReference>
<dbReference type="GO" id="GO:0016324">
    <property type="term" value="C:apical plasma membrane"/>
    <property type="evidence" value="ECO:0000250"/>
    <property type="project" value="UniProtKB"/>
</dbReference>
<dbReference type="GO" id="GO:0005879">
    <property type="term" value="C:axonemal microtubule"/>
    <property type="evidence" value="ECO:0000250"/>
    <property type="project" value="UniProtKB"/>
</dbReference>
<dbReference type="GO" id="GO:0036064">
    <property type="term" value="C:ciliary basal body"/>
    <property type="evidence" value="ECO:0000250"/>
    <property type="project" value="UniProtKB"/>
</dbReference>
<dbReference type="GO" id="GO:0005929">
    <property type="term" value="C:cilium"/>
    <property type="evidence" value="ECO:0000250"/>
    <property type="project" value="UniProtKB"/>
</dbReference>
<dbReference type="GO" id="GO:0044782">
    <property type="term" value="P:cilium organization"/>
    <property type="evidence" value="ECO:0000250"/>
    <property type="project" value="UniProtKB"/>
</dbReference>
<dbReference type="CDD" id="cd23705">
    <property type="entry name" value="Flattop"/>
    <property type="match status" value="1"/>
</dbReference>
<dbReference type="InterPro" id="IPR038797">
    <property type="entry name" value="Fltp"/>
</dbReference>
<dbReference type="PANTHER" id="PTHR34639">
    <property type="entry name" value="PROTEIN FLATTOP"/>
    <property type="match status" value="1"/>
</dbReference>
<dbReference type="PANTHER" id="PTHR34639:SF1">
    <property type="entry name" value="PROTEIN FLATTOP"/>
    <property type="match status" value="1"/>
</dbReference>
<dbReference type="Pfam" id="PF22611">
    <property type="entry name" value="CFAP126"/>
    <property type="match status" value="1"/>
</dbReference>
<keyword id="KW-1003">Cell membrane</keyword>
<keyword id="KW-0966">Cell projection</keyword>
<keyword id="KW-0970">Cilium biogenesis/degradation</keyword>
<keyword id="KW-0963">Cytoplasm</keyword>
<keyword id="KW-0206">Cytoskeleton</keyword>
<keyword id="KW-0472">Membrane</keyword>
<keyword id="KW-1185">Reference proteome</keyword>
<accession>Q3KPS4</accession>
<comment type="function">
    <text evidence="2 3">Microtubule inner protein (MIP) part of the dynein-decorated doublet microtubules (DMTs) in cilia axoneme. Acts as a regulator of cilium basal body docking and positioning in mono- and multiciliated cells. Regulates basal body docking and cilia formation in multiciliated lung cells. Regulates kinocilium positioning and stereocilia bundle morphogenesis in the inner ear.</text>
</comment>
<comment type="subcellular location">
    <subcellularLocation>
        <location evidence="3">Cytoplasm</location>
        <location evidence="3">Cytoskeleton</location>
        <location evidence="3">Cilium basal body</location>
    </subcellularLocation>
    <subcellularLocation>
        <location evidence="3">Cell projection</location>
        <location evidence="3">Cilium</location>
    </subcellularLocation>
    <subcellularLocation>
        <location evidence="3">Apical cell membrane</location>
    </subcellularLocation>
    <subcellularLocation>
        <location evidence="1">Cytoplasm</location>
        <location evidence="1">Cytoskeleton</location>
        <location evidence="1">Cilium axoneme</location>
    </subcellularLocation>
    <text evidence="1 3">Localizes to the apical cell membrane, the basal body and the primary cilium in monociliated node cells (By similarity).</text>
</comment>
<comment type="similarity">
    <text evidence="5">Belongs to the Flattop family.</text>
</comment>
<gene>
    <name evidence="3" type="primary">cfap126</name>
    <name evidence="3" type="synonym">fltp</name>
</gene>
<reference key="1">
    <citation type="submission" date="2005-10" db="EMBL/GenBank/DDBJ databases">
        <authorList>
            <consortium name="NIH - Xenopus Gene Collection (XGC) project"/>
        </authorList>
    </citation>
    <scope>NUCLEOTIDE SEQUENCE [LARGE SCALE MRNA]</scope>
    <source>
        <tissue>Testis</tissue>
    </source>
</reference>
<name>FLTOP_XENLA</name>
<proteinExistence type="evidence at transcript level"/>
<protein>
    <recommendedName>
        <fullName evidence="5">Protein Flattop</fullName>
    </recommendedName>
    <alternativeName>
        <fullName evidence="3">Cilia- and flagella-associated protein 126</fullName>
    </alternativeName>
</protein>
<evidence type="ECO:0000250" key="1">
    <source>
        <dbReference type="UniProtKB" id="Q3SZT6"/>
    </source>
</evidence>
<evidence type="ECO:0000250" key="2">
    <source>
        <dbReference type="UniProtKB" id="Q5VTH2"/>
    </source>
</evidence>
<evidence type="ECO:0000250" key="3">
    <source>
        <dbReference type="UniProtKB" id="Q6P8X9"/>
    </source>
</evidence>
<evidence type="ECO:0000256" key="4">
    <source>
        <dbReference type="SAM" id="MobiDB-lite"/>
    </source>
</evidence>
<evidence type="ECO:0000305" key="5"/>
<sequence>MATHYSANQYQSAFTPKQLHCWSIPKDFKQHPSTHDDYTQFIANERGHLLAGVPRSQKNPWGTFLGTWDLPTKIPPSKLSLTSRSAEASKRLTNWIQNSEELLHACNGLQPQISGKASGKTDPPRDSSQGQQDPPVEESNKQTPLYRGRSKAESNRSSHRSVSSEKGGITAGDKVLQAQS</sequence>
<organism>
    <name type="scientific">Xenopus laevis</name>
    <name type="common">African clawed frog</name>
    <dbReference type="NCBI Taxonomy" id="8355"/>
    <lineage>
        <taxon>Eukaryota</taxon>
        <taxon>Metazoa</taxon>
        <taxon>Chordata</taxon>
        <taxon>Craniata</taxon>
        <taxon>Vertebrata</taxon>
        <taxon>Euteleostomi</taxon>
        <taxon>Amphibia</taxon>
        <taxon>Batrachia</taxon>
        <taxon>Anura</taxon>
        <taxon>Pipoidea</taxon>
        <taxon>Pipidae</taxon>
        <taxon>Xenopodinae</taxon>
        <taxon>Xenopus</taxon>
        <taxon>Xenopus</taxon>
    </lineage>
</organism>
<feature type="chain" id="PRO_0000316975" description="Protein Flattop">
    <location>
        <begin position="1"/>
        <end position="180"/>
    </location>
</feature>
<feature type="region of interest" description="Disordered" evidence="4">
    <location>
        <begin position="111"/>
        <end position="180"/>
    </location>
</feature>